<evidence type="ECO:0000255" key="1">
    <source>
        <dbReference type="PROSITE-ProRule" id="PRU00257"/>
    </source>
</evidence>
<evidence type="ECO:0000305" key="2"/>
<reference key="1">
    <citation type="journal article" date="1997" name="Nature">
        <title>The complete genome sequence of the Gram-positive bacterium Bacillus subtilis.</title>
        <authorList>
            <person name="Kunst F."/>
            <person name="Ogasawara N."/>
            <person name="Moszer I."/>
            <person name="Albertini A.M."/>
            <person name="Alloni G."/>
            <person name="Azevedo V."/>
            <person name="Bertero M.G."/>
            <person name="Bessieres P."/>
            <person name="Bolotin A."/>
            <person name="Borchert S."/>
            <person name="Borriss R."/>
            <person name="Boursier L."/>
            <person name="Brans A."/>
            <person name="Braun M."/>
            <person name="Brignell S.C."/>
            <person name="Bron S."/>
            <person name="Brouillet S."/>
            <person name="Bruschi C.V."/>
            <person name="Caldwell B."/>
            <person name="Capuano V."/>
            <person name="Carter N.M."/>
            <person name="Choi S.-K."/>
            <person name="Codani J.-J."/>
            <person name="Connerton I.F."/>
            <person name="Cummings N.J."/>
            <person name="Daniel R.A."/>
            <person name="Denizot F."/>
            <person name="Devine K.M."/>
            <person name="Duesterhoeft A."/>
            <person name="Ehrlich S.D."/>
            <person name="Emmerson P.T."/>
            <person name="Entian K.-D."/>
            <person name="Errington J."/>
            <person name="Fabret C."/>
            <person name="Ferrari E."/>
            <person name="Foulger D."/>
            <person name="Fritz C."/>
            <person name="Fujita M."/>
            <person name="Fujita Y."/>
            <person name="Fuma S."/>
            <person name="Galizzi A."/>
            <person name="Galleron N."/>
            <person name="Ghim S.-Y."/>
            <person name="Glaser P."/>
            <person name="Goffeau A."/>
            <person name="Golightly E.J."/>
            <person name="Grandi G."/>
            <person name="Guiseppi G."/>
            <person name="Guy B.J."/>
            <person name="Haga K."/>
            <person name="Haiech J."/>
            <person name="Harwood C.R."/>
            <person name="Henaut A."/>
            <person name="Hilbert H."/>
            <person name="Holsappel S."/>
            <person name="Hosono S."/>
            <person name="Hullo M.-F."/>
            <person name="Itaya M."/>
            <person name="Jones L.-M."/>
            <person name="Joris B."/>
            <person name="Karamata D."/>
            <person name="Kasahara Y."/>
            <person name="Klaerr-Blanchard M."/>
            <person name="Klein C."/>
            <person name="Kobayashi Y."/>
            <person name="Koetter P."/>
            <person name="Koningstein G."/>
            <person name="Krogh S."/>
            <person name="Kumano M."/>
            <person name="Kurita K."/>
            <person name="Lapidus A."/>
            <person name="Lardinois S."/>
            <person name="Lauber J."/>
            <person name="Lazarevic V."/>
            <person name="Lee S.-M."/>
            <person name="Levine A."/>
            <person name="Liu H."/>
            <person name="Masuda S."/>
            <person name="Mauel C."/>
            <person name="Medigue C."/>
            <person name="Medina N."/>
            <person name="Mellado R.P."/>
            <person name="Mizuno M."/>
            <person name="Moestl D."/>
            <person name="Nakai S."/>
            <person name="Noback M."/>
            <person name="Noone D."/>
            <person name="O'Reilly M."/>
            <person name="Ogawa K."/>
            <person name="Ogiwara A."/>
            <person name="Oudega B."/>
            <person name="Park S.-H."/>
            <person name="Parro V."/>
            <person name="Pohl T.M."/>
            <person name="Portetelle D."/>
            <person name="Porwollik S."/>
            <person name="Prescott A.M."/>
            <person name="Presecan E."/>
            <person name="Pujic P."/>
            <person name="Purnelle B."/>
            <person name="Rapoport G."/>
            <person name="Rey M."/>
            <person name="Reynolds S."/>
            <person name="Rieger M."/>
            <person name="Rivolta C."/>
            <person name="Rocha E."/>
            <person name="Roche B."/>
            <person name="Rose M."/>
            <person name="Sadaie Y."/>
            <person name="Sato T."/>
            <person name="Scanlan E."/>
            <person name="Schleich S."/>
            <person name="Schroeter R."/>
            <person name="Scoffone F."/>
            <person name="Sekiguchi J."/>
            <person name="Sekowska A."/>
            <person name="Seror S.J."/>
            <person name="Serror P."/>
            <person name="Shin B.-S."/>
            <person name="Soldo B."/>
            <person name="Sorokin A."/>
            <person name="Tacconi E."/>
            <person name="Takagi T."/>
            <person name="Takahashi H."/>
            <person name="Takemaru K."/>
            <person name="Takeuchi M."/>
            <person name="Tamakoshi A."/>
            <person name="Tanaka T."/>
            <person name="Terpstra P."/>
            <person name="Tognoni A."/>
            <person name="Tosato V."/>
            <person name="Uchiyama S."/>
            <person name="Vandenbol M."/>
            <person name="Vannier F."/>
            <person name="Vassarotti A."/>
            <person name="Viari A."/>
            <person name="Wambutt R."/>
            <person name="Wedler E."/>
            <person name="Wedler H."/>
            <person name="Weitzenegger T."/>
            <person name="Winters P."/>
            <person name="Wipat A."/>
            <person name="Yamamoto H."/>
            <person name="Yamane K."/>
            <person name="Yasumoto K."/>
            <person name="Yata K."/>
            <person name="Yoshida K."/>
            <person name="Yoshikawa H.-F."/>
            <person name="Zumstein E."/>
            <person name="Yoshikawa H."/>
            <person name="Danchin A."/>
        </authorList>
    </citation>
    <scope>NUCLEOTIDE SEQUENCE [LARGE SCALE GENOMIC DNA]</scope>
    <source>
        <strain>168</strain>
    </source>
</reference>
<proteinExistence type="predicted"/>
<name>YVZC_BACSU</name>
<feature type="chain" id="PRO_0000360682" description="Uncharacterized HTH-type transcriptional regulator YvzC">
    <location>
        <begin position="1"/>
        <end position="77"/>
    </location>
</feature>
<feature type="domain" description="HTH cro/C1-type" evidence="1">
    <location>
        <begin position="13"/>
        <end position="67"/>
    </location>
</feature>
<feature type="DNA-binding region" description="H-T-H motif" evidence="1">
    <location>
        <begin position="24"/>
        <end position="43"/>
    </location>
</feature>
<gene>
    <name type="primary">yvzC</name>
    <name type="ordered locus">BSU33650</name>
</gene>
<accession>O32235</accession>
<keyword id="KW-0963">Cytoplasm</keyword>
<keyword id="KW-0238">DNA-binding</keyword>
<keyword id="KW-1185">Reference proteome</keyword>
<keyword id="KW-0804">Transcription</keyword>
<keyword id="KW-0805">Transcription regulation</keyword>
<protein>
    <recommendedName>
        <fullName>Uncharacterized HTH-type transcriptional regulator YvzC</fullName>
    </recommendedName>
</protein>
<sequence>MPVEKIQIRRDYVLQYMVNNDYSLNQLALEIGVSPATLSRVLNGERRPGQLVIGKMLHYFNLKFEDLFYYDFVDKSQ</sequence>
<dbReference type="EMBL" id="AL009126">
    <property type="protein sequence ID" value="CAB15370.1"/>
    <property type="molecule type" value="Genomic_DNA"/>
</dbReference>
<dbReference type="PIR" id="G70049">
    <property type="entry name" value="G70049"/>
</dbReference>
<dbReference type="RefSeq" id="NP_391245.1">
    <property type="nucleotide sequence ID" value="NC_000964.3"/>
</dbReference>
<dbReference type="RefSeq" id="WP_009968172.1">
    <property type="nucleotide sequence ID" value="NZ_OZ025638.1"/>
</dbReference>
<dbReference type="SMR" id="O32235"/>
<dbReference type="FunCoup" id="O32235">
    <property type="interactions" value="114"/>
</dbReference>
<dbReference type="STRING" id="224308.BSU33650"/>
<dbReference type="PaxDb" id="224308-BSU33650"/>
<dbReference type="EnsemblBacteria" id="CAB15370">
    <property type="protein sequence ID" value="CAB15370"/>
    <property type="gene ID" value="BSU_33650"/>
</dbReference>
<dbReference type="GeneID" id="936178"/>
<dbReference type="KEGG" id="bsu:BSU33650"/>
<dbReference type="PATRIC" id="fig|224308.179.peg.3650"/>
<dbReference type="eggNOG" id="COG1476">
    <property type="taxonomic scope" value="Bacteria"/>
</dbReference>
<dbReference type="InParanoid" id="O32235"/>
<dbReference type="OrthoDB" id="2896958at2"/>
<dbReference type="BioCyc" id="BSUB:BSU33650-MONOMER"/>
<dbReference type="Proteomes" id="UP000001570">
    <property type="component" value="Chromosome"/>
</dbReference>
<dbReference type="GO" id="GO:0005737">
    <property type="term" value="C:cytoplasm"/>
    <property type="evidence" value="ECO:0007669"/>
    <property type="project" value="UniProtKB-SubCell"/>
</dbReference>
<dbReference type="GO" id="GO:0003677">
    <property type="term" value="F:DNA binding"/>
    <property type="evidence" value="ECO:0007669"/>
    <property type="project" value="UniProtKB-KW"/>
</dbReference>
<dbReference type="CDD" id="cd00093">
    <property type="entry name" value="HTH_XRE"/>
    <property type="match status" value="1"/>
</dbReference>
<dbReference type="Gene3D" id="1.10.260.40">
    <property type="entry name" value="lambda repressor-like DNA-binding domains"/>
    <property type="match status" value="1"/>
</dbReference>
<dbReference type="InterPro" id="IPR001387">
    <property type="entry name" value="Cro/C1-type_HTH"/>
</dbReference>
<dbReference type="InterPro" id="IPR010982">
    <property type="entry name" value="Lambda_DNA-bd_dom_sf"/>
</dbReference>
<dbReference type="Pfam" id="PF01381">
    <property type="entry name" value="HTH_3"/>
    <property type="match status" value="1"/>
</dbReference>
<dbReference type="SMART" id="SM00530">
    <property type="entry name" value="HTH_XRE"/>
    <property type="match status" value="1"/>
</dbReference>
<dbReference type="SUPFAM" id="SSF47413">
    <property type="entry name" value="lambda repressor-like DNA-binding domains"/>
    <property type="match status" value="1"/>
</dbReference>
<dbReference type="PROSITE" id="PS50943">
    <property type="entry name" value="HTH_CROC1"/>
    <property type="match status" value="1"/>
</dbReference>
<organism>
    <name type="scientific">Bacillus subtilis (strain 168)</name>
    <dbReference type="NCBI Taxonomy" id="224308"/>
    <lineage>
        <taxon>Bacteria</taxon>
        <taxon>Bacillati</taxon>
        <taxon>Bacillota</taxon>
        <taxon>Bacilli</taxon>
        <taxon>Bacillales</taxon>
        <taxon>Bacillaceae</taxon>
        <taxon>Bacillus</taxon>
    </lineage>
</organism>
<comment type="subcellular location">
    <subcellularLocation>
        <location evidence="2">Cytoplasm</location>
    </subcellularLocation>
</comment>